<feature type="chain" id="PRO_1000016746" description="Holliday junction resolvase RecU">
    <location>
        <begin position="1"/>
        <end position="197"/>
    </location>
</feature>
<feature type="binding site" evidence="1">
    <location>
        <position position="82"/>
    </location>
    <ligand>
        <name>Mg(2+)</name>
        <dbReference type="ChEBI" id="CHEBI:18420"/>
    </ligand>
</feature>
<feature type="binding site" evidence="1">
    <location>
        <position position="84"/>
    </location>
    <ligand>
        <name>Mg(2+)</name>
        <dbReference type="ChEBI" id="CHEBI:18420"/>
    </ligand>
</feature>
<feature type="binding site" evidence="1">
    <location>
        <position position="97"/>
    </location>
    <ligand>
        <name>Mg(2+)</name>
        <dbReference type="ChEBI" id="CHEBI:18420"/>
    </ligand>
</feature>
<feature type="binding site" evidence="1">
    <location>
        <position position="116"/>
    </location>
    <ligand>
        <name>Mg(2+)</name>
        <dbReference type="ChEBI" id="CHEBI:18420"/>
    </ligand>
</feature>
<feature type="site" description="Transition state stabilizer" evidence="1">
    <location>
        <position position="99"/>
    </location>
</feature>
<protein>
    <recommendedName>
        <fullName evidence="1">Holliday junction resolvase RecU</fullName>
        <ecNumber evidence="1">3.1.21.10</ecNumber>
    </recommendedName>
    <alternativeName>
        <fullName evidence="1">Recombination protein U homolog</fullName>
    </alternativeName>
</protein>
<accession>Q8DVL3</accession>
<evidence type="ECO:0000255" key="1">
    <source>
        <dbReference type="HAMAP-Rule" id="MF_00130"/>
    </source>
</evidence>
<comment type="function">
    <text evidence="1">Endonuclease that resolves Holliday junction intermediates in genetic recombination. Cleaves mobile four-strand junctions by introducing symmetrical nicks in paired strands. Promotes annealing of linear ssDNA with homologous dsDNA. Required for DNA repair, homologous recombination and chromosome segregation.</text>
</comment>
<comment type="catalytic activity">
    <reaction evidence="1">
        <text>Endonucleolytic cleavage at a junction such as a reciprocal single-stranded crossover between two homologous DNA duplexes (Holliday junction).</text>
        <dbReference type="EC" id="3.1.21.10"/>
    </reaction>
</comment>
<comment type="cofactor">
    <cofactor evidence="1">
        <name>Mg(2+)</name>
        <dbReference type="ChEBI" id="CHEBI:18420"/>
    </cofactor>
    <text evidence="1">Binds 1 Mg(2+) ion per subunit.</text>
</comment>
<comment type="subcellular location">
    <subcellularLocation>
        <location evidence="1">Cytoplasm</location>
    </subcellularLocation>
</comment>
<comment type="similarity">
    <text evidence="1">Belongs to the RecU family.</text>
</comment>
<dbReference type="EC" id="3.1.21.10" evidence="1"/>
<dbReference type="EMBL" id="AE014133">
    <property type="protein sequence ID" value="AAN58217.1"/>
    <property type="molecule type" value="Genomic_DNA"/>
</dbReference>
<dbReference type="RefSeq" id="NP_720911.1">
    <property type="nucleotide sequence ID" value="NC_004350.2"/>
</dbReference>
<dbReference type="RefSeq" id="WP_002263052.1">
    <property type="nucleotide sequence ID" value="NC_004350.2"/>
</dbReference>
<dbReference type="SMR" id="Q8DVL3"/>
<dbReference type="STRING" id="210007.SMU_469"/>
<dbReference type="GeneID" id="93859962"/>
<dbReference type="KEGG" id="smu:SMU_469"/>
<dbReference type="PATRIC" id="fig|210007.7.peg.411"/>
<dbReference type="eggNOG" id="COG3331">
    <property type="taxonomic scope" value="Bacteria"/>
</dbReference>
<dbReference type="HOGENOM" id="CLU_096340_0_0_9"/>
<dbReference type="OrthoDB" id="9783592at2"/>
<dbReference type="PhylomeDB" id="Q8DVL3"/>
<dbReference type="Proteomes" id="UP000002512">
    <property type="component" value="Chromosome"/>
</dbReference>
<dbReference type="GO" id="GO:0005737">
    <property type="term" value="C:cytoplasm"/>
    <property type="evidence" value="ECO:0007669"/>
    <property type="project" value="UniProtKB-SubCell"/>
</dbReference>
<dbReference type="GO" id="GO:0004519">
    <property type="term" value="F:endonuclease activity"/>
    <property type="evidence" value="ECO:0007669"/>
    <property type="project" value="UniProtKB-UniRule"/>
</dbReference>
<dbReference type="GO" id="GO:0000287">
    <property type="term" value="F:magnesium ion binding"/>
    <property type="evidence" value="ECO:0007669"/>
    <property type="project" value="UniProtKB-UniRule"/>
</dbReference>
<dbReference type="GO" id="GO:0003676">
    <property type="term" value="F:nucleic acid binding"/>
    <property type="evidence" value="ECO:0007669"/>
    <property type="project" value="InterPro"/>
</dbReference>
<dbReference type="GO" id="GO:0007059">
    <property type="term" value="P:chromosome segregation"/>
    <property type="evidence" value="ECO:0007669"/>
    <property type="project" value="UniProtKB-UniRule"/>
</dbReference>
<dbReference type="GO" id="GO:0006310">
    <property type="term" value="P:DNA recombination"/>
    <property type="evidence" value="ECO:0007669"/>
    <property type="project" value="UniProtKB-UniRule"/>
</dbReference>
<dbReference type="GO" id="GO:0006281">
    <property type="term" value="P:DNA repair"/>
    <property type="evidence" value="ECO:0007669"/>
    <property type="project" value="UniProtKB-UniRule"/>
</dbReference>
<dbReference type="CDD" id="cd22354">
    <property type="entry name" value="RecU-like"/>
    <property type="match status" value="1"/>
</dbReference>
<dbReference type="Gene3D" id="3.40.1350.10">
    <property type="match status" value="1"/>
</dbReference>
<dbReference type="HAMAP" id="MF_00130">
    <property type="entry name" value="RecU"/>
    <property type="match status" value="1"/>
</dbReference>
<dbReference type="InterPro" id="IPR004612">
    <property type="entry name" value="Resolv_RecU"/>
</dbReference>
<dbReference type="InterPro" id="IPR011335">
    <property type="entry name" value="Restrct_endonuc-II-like"/>
</dbReference>
<dbReference type="InterPro" id="IPR011856">
    <property type="entry name" value="tRNA_endonuc-like_dom_sf"/>
</dbReference>
<dbReference type="NCBIfam" id="NF002580">
    <property type="entry name" value="PRK02234.1-1"/>
    <property type="match status" value="1"/>
</dbReference>
<dbReference type="NCBIfam" id="NF002584">
    <property type="entry name" value="PRK02234.1-5"/>
    <property type="match status" value="1"/>
</dbReference>
<dbReference type="NCBIfam" id="TIGR00648">
    <property type="entry name" value="recU"/>
    <property type="match status" value="1"/>
</dbReference>
<dbReference type="Pfam" id="PF03838">
    <property type="entry name" value="RecU"/>
    <property type="match status" value="1"/>
</dbReference>
<dbReference type="PIRSF" id="PIRSF037785">
    <property type="entry name" value="RecU"/>
    <property type="match status" value="1"/>
</dbReference>
<dbReference type="SUPFAM" id="SSF52980">
    <property type="entry name" value="Restriction endonuclease-like"/>
    <property type="match status" value="1"/>
</dbReference>
<gene>
    <name evidence="1" type="primary">recU</name>
    <name type="ordered locus">SMU_469</name>
</gene>
<sequence length="197" mass="22815">MVNYPHHFIRKQSKPSQISKTINFANRGMSFEAAINATNNYYLSQKIAVIHKKPTPIQIVRVDYPRRSRAKIVEAYFRQASTTDYSGVYKGYYIDFEAKETRHKTSIPMKNFHAHQIKHMSQVLDQKGICFVLLHFSTLRETYLLPASHLIHFYRIDNGGKSMPLDYIKKNGYQVNVSAFPQVPYLDIIDKNILGGD</sequence>
<reference key="1">
    <citation type="journal article" date="2002" name="Proc. Natl. Acad. Sci. U.S.A.">
        <title>Genome sequence of Streptococcus mutans UA159, a cariogenic dental pathogen.</title>
        <authorList>
            <person name="Ajdic D.J."/>
            <person name="McShan W.M."/>
            <person name="McLaughlin R.E."/>
            <person name="Savic G."/>
            <person name="Chang J."/>
            <person name="Carson M.B."/>
            <person name="Primeaux C."/>
            <person name="Tian R."/>
            <person name="Kenton S."/>
            <person name="Jia H.G."/>
            <person name="Lin S.P."/>
            <person name="Qian Y."/>
            <person name="Li S."/>
            <person name="Zhu H."/>
            <person name="Najar F.Z."/>
            <person name="Lai H."/>
            <person name="White J."/>
            <person name="Roe B.A."/>
            <person name="Ferretti J.J."/>
        </authorList>
    </citation>
    <scope>NUCLEOTIDE SEQUENCE [LARGE SCALE GENOMIC DNA]</scope>
    <source>
        <strain>ATCC 700610 / UA159</strain>
    </source>
</reference>
<proteinExistence type="inferred from homology"/>
<name>RECU_STRMU</name>
<organism>
    <name type="scientific">Streptococcus mutans serotype c (strain ATCC 700610 / UA159)</name>
    <dbReference type="NCBI Taxonomy" id="210007"/>
    <lineage>
        <taxon>Bacteria</taxon>
        <taxon>Bacillati</taxon>
        <taxon>Bacillota</taxon>
        <taxon>Bacilli</taxon>
        <taxon>Lactobacillales</taxon>
        <taxon>Streptococcaceae</taxon>
        <taxon>Streptococcus</taxon>
    </lineage>
</organism>
<keyword id="KW-0963">Cytoplasm</keyword>
<keyword id="KW-0227">DNA damage</keyword>
<keyword id="KW-0233">DNA recombination</keyword>
<keyword id="KW-0234">DNA repair</keyword>
<keyword id="KW-0255">Endonuclease</keyword>
<keyword id="KW-0378">Hydrolase</keyword>
<keyword id="KW-0460">Magnesium</keyword>
<keyword id="KW-0479">Metal-binding</keyword>
<keyword id="KW-0540">Nuclease</keyword>
<keyword id="KW-1185">Reference proteome</keyword>